<sequence length="34" mass="3554">GIFLNALKNFAKTAGKGVLQSVLNTASCKLSKQC</sequence>
<protein>
    <recommendedName>
        <fullName evidence="3">Brevinin-2Rf</fullName>
    </recommendedName>
</protein>
<comment type="function">
    <text evidence="1">Antimicrobial peptide.</text>
</comment>
<comment type="subcellular location">
    <subcellularLocation>
        <location evidence="2">Secreted</location>
    </subcellularLocation>
</comment>
<comment type="tissue specificity">
    <text evidence="5">Expressed by the skin glands.</text>
</comment>
<comment type="mass spectrometry" mass="3549.9" method="Electrospray" evidence="2"/>
<comment type="similarity">
    <text evidence="4">Belongs to the frog skin active peptide (FSAP) family. Brevinin subfamily.</text>
</comment>
<keyword id="KW-0929">Antimicrobial</keyword>
<keyword id="KW-0903">Direct protein sequencing</keyword>
<keyword id="KW-1015">Disulfide bond</keyword>
<keyword id="KW-0964">Secreted</keyword>
<name>BR2F_PELRI</name>
<accession>C0HL00</accession>
<dbReference type="SMR" id="C0HL00"/>
<dbReference type="GO" id="GO:0005576">
    <property type="term" value="C:extracellular region"/>
    <property type="evidence" value="ECO:0000314"/>
    <property type="project" value="UniProtKB"/>
</dbReference>
<dbReference type="GO" id="GO:0006952">
    <property type="term" value="P:defense response"/>
    <property type="evidence" value="ECO:0007669"/>
    <property type="project" value="InterPro"/>
</dbReference>
<dbReference type="InterPro" id="IPR012521">
    <property type="entry name" value="Antimicrobial_frog_2"/>
</dbReference>
<dbReference type="Pfam" id="PF08023">
    <property type="entry name" value="Antimicrobial_2"/>
    <property type="match status" value="1"/>
</dbReference>
<proteinExistence type="evidence at protein level"/>
<feature type="peptide" id="PRO_0000442760" description="Brevinin-2Rf" evidence="2">
    <location>
        <begin position="1"/>
        <end position="34"/>
    </location>
</feature>
<feature type="disulfide bond" evidence="2">
    <location>
        <begin position="28"/>
        <end position="34"/>
    </location>
</feature>
<organism>
    <name type="scientific">Pelophylax ridibundus</name>
    <name type="common">Marsh frog</name>
    <name type="synonym">Rana ridibunda</name>
    <dbReference type="NCBI Taxonomy" id="8406"/>
    <lineage>
        <taxon>Eukaryota</taxon>
        <taxon>Metazoa</taxon>
        <taxon>Chordata</taxon>
        <taxon>Craniata</taxon>
        <taxon>Vertebrata</taxon>
        <taxon>Euteleostomi</taxon>
        <taxon>Amphibia</taxon>
        <taxon>Batrachia</taxon>
        <taxon>Anura</taxon>
        <taxon>Neobatrachia</taxon>
        <taxon>Ranoidea</taxon>
        <taxon>Ranidae</taxon>
        <taxon>Pelophylax</taxon>
    </lineage>
</organism>
<reference evidence="4" key="1">
    <citation type="journal article" date="2017" name="Anal. Bioanal. Chem.">
        <title>Differentiation of frogs from two populations belonging to the Pelophylax esculentus complex by LC-MS/MS comparison of their skin peptidomes.</title>
        <authorList>
            <person name="Samgina T.Y."/>
            <person name="Artemenko K.A."/>
            <person name="Bergquist J."/>
            <person name="Trebse P."/>
            <person name="Torkar G."/>
            <person name="Tolpina M.D."/>
            <person name="Lebedev A.T."/>
        </authorList>
    </citation>
    <scope>PROTEIN SEQUENCE</scope>
    <scope>SUBCELLULAR LOCATION</scope>
    <scope>MASS SPECTROMETRY</scope>
    <scope>IDENTIFICATION BY MASS SPECTROMETRY</scope>
    <source>
        <tissue evidence="3">Skin secretion</tissue>
    </source>
</reference>
<evidence type="ECO:0000250" key="1">
    <source>
        <dbReference type="UniProtKB" id="P0C8S9"/>
    </source>
</evidence>
<evidence type="ECO:0000269" key="2">
    <source>
    </source>
</evidence>
<evidence type="ECO:0000303" key="3">
    <source>
    </source>
</evidence>
<evidence type="ECO:0000305" key="4"/>
<evidence type="ECO:0000305" key="5">
    <source>
    </source>
</evidence>